<accession>P02153</accession>
<organism>
    <name type="scientific">Sapajus apella</name>
    <name type="common">Brown-capped capuchin</name>
    <name type="synonym">Cebus apella</name>
    <dbReference type="NCBI Taxonomy" id="9515"/>
    <lineage>
        <taxon>Eukaryota</taxon>
        <taxon>Metazoa</taxon>
        <taxon>Chordata</taxon>
        <taxon>Craniata</taxon>
        <taxon>Vertebrata</taxon>
        <taxon>Euteleostomi</taxon>
        <taxon>Mammalia</taxon>
        <taxon>Eutheria</taxon>
        <taxon>Euarchontoglires</taxon>
        <taxon>Primates</taxon>
        <taxon>Haplorrhini</taxon>
        <taxon>Platyrrhini</taxon>
        <taxon>Cebidae</taxon>
        <taxon>Cebinae</taxon>
        <taxon>Sapajus</taxon>
    </lineage>
</organism>
<feature type="initiator methionine" description="Removed" evidence="8">
    <location>
        <position position="1"/>
    </location>
</feature>
<feature type="chain" id="PRO_0000053284" description="Myoglobin">
    <location>
        <begin position="2"/>
        <end position="154"/>
    </location>
</feature>
<feature type="domain" description="Globin" evidence="7">
    <location>
        <begin position="2"/>
        <end position="148"/>
    </location>
</feature>
<feature type="binding site" evidence="5">
    <location>
        <position position="65"/>
    </location>
    <ligand>
        <name>nitrite</name>
        <dbReference type="ChEBI" id="CHEBI:16301"/>
    </ligand>
</feature>
<feature type="binding site" evidence="3 7">
    <location>
        <position position="65"/>
    </location>
    <ligand>
        <name>O2</name>
        <dbReference type="ChEBI" id="CHEBI:15379"/>
    </ligand>
</feature>
<feature type="binding site" description="proximal binding residue" evidence="1">
    <location>
        <position position="94"/>
    </location>
    <ligand>
        <name>heme b</name>
        <dbReference type="ChEBI" id="CHEBI:60344"/>
    </ligand>
    <ligandPart>
        <name>Fe</name>
        <dbReference type="ChEBI" id="CHEBI:18248"/>
    </ligandPart>
</feature>
<feature type="modified residue" description="Phosphoserine" evidence="6">
    <location>
        <position position="4"/>
    </location>
</feature>
<feature type="modified residue" description="Phosphothreonine" evidence="4">
    <location>
        <position position="68"/>
    </location>
</feature>
<keyword id="KW-0963">Cytoplasm</keyword>
<keyword id="KW-0903">Direct protein sequencing</keyword>
<keyword id="KW-0349">Heme</keyword>
<keyword id="KW-0408">Iron</keyword>
<keyword id="KW-0479">Metal-binding</keyword>
<keyword id="KW-0514">Muscle protein</keyword>
<keyword id="KW-0560">Oxidoreductase</keyword>
<keyword id="KW-0561">Oxygen transport</keyword>
<keyword id="KW-0597">Phosphoprotein</keyword>
<keyword id="KW-1185">Reference proteome</keyword>
<keyword id="KW-0813">Transport</keyword>
<evidence type="ECO:0000250" key="1">
    <source>
        <dbReference type="UniProtKB" id="P02144"/>
    </source>
</evidence>
<evidence type="ECO:0000250" key="2">
    <source>
        <dbReference type="UniProtKB" id="P02185"/>
    </source>
</evidence>
<evidence type="ECO:0000250" key="3">
    <source>
        <dbReference type="UniProtKB" id="P02189"/>
    </source>
</evidence>
<evidence type="ECO:0000250" key="4">
    <source>
        <dbReference type="UniProtKB" id="P04247"/>
    </source>
</evidence>
<evidence type="ECO:0000250" key="5">
    <source>
        <dbReference type="UniProtKB" id="P68082"/>
    </source>
</evidence>
<evidence type="ECO:0000250" key="6">
    <source>
        <dbReference type="UniProtKB" id="Q9QZ76"/>
    </source>
</evidence>
<evidence type="ECO:0000255" key="7">
    <source>
        <dbReference type="PROSITE-ProRule" id="PRU00238"/>
    </source>
</evidence>
<evidence type="ECO:0000269" key="8">
    <source>
    </source>
</evidence>
<reference key="1">
    <citation type="journal article" date="1980" name="Biochim. Biophys. Acta">
        <title>The myoglobin of primates X.</title>
        <authorList>
            <person name="Dene H."/>
            <person name="Sazy J."/>
            <person name="Romero-Herrera A.E."/>
        </authorList>
    </citation>
    <scope>PROTEIN SEQUENCE OF 2-154</scope>
    <source>
        <tissue>Skeletal muscle</tissue>
    </source>
</reference>
<gene>
    <name type="primary">MB</name>
</gene>
<protein>
    <recommendedName>
        <fullName>Myoglobin</fullName>
    </recommendedName>
    <alternativeName>
        <fullName evidence="1">Nitrite reductase MB</fullName>
        <ecNumber evidence="1">1.7.-.-</ecNumber>
    </alternativeName>
    <alternativeName>
        <fullName evidence="1">Pseudoperoxidase MB</fullName>
        <ecNumber evidence="1">1.11.1.-</ecNumber>
    </alternativeName>
</protein>
<comment type="function">
    <text evidence="1">Monomeric heme protein which primary function is to store oxygen and facilitate its diffusion within muscle tissues. Reversibly binds oxygen through a pentacoordinated heme iron and enables its timely and efficient release as needed during periods of heightened demand. Depending on the oxidative conditions of tissues and cells, and in addition to its ability to bind oxygen, it also has a nitrite reductase activity whereby it regulates the production of bioactive nitric oxide. Under stress conditions, like hypoxia and anoxia, it also protects cells against reactive oxygen species thanks to its pseudoperoxidase activity.</text>
</comment>
<comment type="catalytic activity">
    <reaction evidence="1">
        <text>Fe(III)-heme b-[protein] + nitric oxide + H2O = Fe(II)-heme b-[protein] + nitrite + 2 H(+)</text>
        <dbReference type="Rhea" id="RHEA:77711"/>
        <dbReference type="Rhea" id="RHEA-COMP:18975"/>
        <dbReference type="Rhea" id="RHEA-COMP:18976"/>
        <dbReference type="ChEBI" id="CHEBI:15377"/>
        <dbReference type="ChEBI" id="CHEBI:15378"/>
        <dbReference type="ChEBI" id="CHEBI:16301"/>
        <dbReference type="ChEBI" id="CHEBI:16480"/>
        <dbReference type="ChEBI" id="CHEBI:55376"/>
        <dbReference type="ChEBI" id="CHEBI:60344"/>
    </reaction>
    <physiologicalReaction direction="right-to-left" evidence="1">
        <dbReference type="Rhea" id="RHEA:77713"/>
    </physiologicalReaction>
</comment>
<comment type="catalytic activity">
    <reaction evidence="1">
        <text>H2O2 + AH2 = A + 2 H2O</text>
        <dbReference type="Rhea" id="RHEA:30275"/>
        <dbReference type="ChEBI" id="CHEBI:13193"/>
        <dbReference type="ChEBI" id="CHEBI:15377"/>
        <dbReference type="ChEBI" id="CHEBI:16240"/>
        <dbReference type="ChEBI" id="CHEBI:17499"/>
    </reaction>
</comment>
<comment type="subunit">
    <text evidence="2">Monomeric.</text>
</comment>
<comment type="subcellular location">
    <subcellularLocation>
        <location evidence="1">Cytoplasm</location>
        <location evidence="1">Sarcoplasm</location>
    </subcellularLocation>
</comment>
<comment type="similarity">
    <text evidence="7">Belongs to the globin family.</text>
</comment>
<sequence length="154" mass="17138">MGLSDGEWQLVLNVWGKVEADIPSHGQEVLISLFKGHPETLEKFDKFKHLKSEDEMKASEELKKHGATVLTALGGILKKKGQHEAELKPLAQSHATKHKIPVKYLEFISDAIVHVLQKKHPGDFGADAQGAMKKALELFRNDMAAKYKELGFQG</sequence>
<name>MYG_SAPAP</name>
<dbReference type="EC" id="1.7.-.-" evidence="1"/>
<dbReference type="EC" id="1.11.1.-" evidence="1"/>
<dbReference type="PIR" id="A02473">
    <property type="entry name" value="MYMQC"/>
</dbReference>
<dbReference type="SMR" id="P02153"/>
<dbReference type="Proteomes" id="UP000504640">
    <property type="component" value="Unplaced"/>
</dbReference>
<dbReference type="GO" id="GO:0070062">
    <property type="term" value="C:extracellular exosome"/>
    <property type="evidence" value="ECO:0007669"/>
    <property type="project" value="TreeGrafter"/>
</dbReference>
<dbReference type="GO" id="GO:0016528">
    <property type="term" value="C:sarcoplasm"/>
    <property type="evidence" value="ECO:0000250"/>
    <property type="project" value="UniProtKB"/>
</dbReference>
<dbReference type="GO" id="GO:0020037">
    <property type="term" value="F:heme binding"/>
    <property type="evidence" value="ECO:0007669"/>
    <property type="project" value="InterPro"/>
</dbReference>
<dbReference type="GO" id="GO:0046872">
    <property type="term" value="F:metal ion binding"/>
    <property type="evidence" value="ECO:0007669"/>
    <property type="project" value="UniProtKB-KW"/>
</dbReference>
<dbReference type="GO" id="GO:0098809">
    <property type="term" value="F:nitrite reductase activity"/>
    <property type="evidence" value="ECO:0000250"/>
    <property type="project" value="UniProtKB"/>
</dbReference>
<dbReference type="GO" id="GO:0019825">
    <property type="term" value="F:oxygen binding"/>
    <property type="evidence" value="ECO:0007669"/>
    <property type="project" value="InterPro"/>
</dbReference>
<dbReference type="GO" id="GO:0005344">
    <property type="term" value="F:oxygen carrier activity"/>
    <property type="evidence" value="ECO:0000250"/>
    <property type="project" value="UniProtKB"/>
</dbReference>
<dbReference type="GO" id="GO:0004601">
    <property type="term" value="F:peroxidase activity"/>
    <property type="evidence" value="ECO:0000250"/>
    <property type="project" value="UniProtKB"/>
</dbReference>
<dbReference type="GO" id="GO:0019430">
    <property type="term" value="P:removal of superoxide radicals"/>
    <property type="evidence" value="ECO:0000250"/>
    <property type="project" value="UniProtKB"/>
</dbReference>
<dbReference type="CDD" id="cd08926">
    <property type="entry name" value="Mb"/>
    <property type="match status" value="1"/>
</dbReference>
<dbReference type="Gene3D" id="6.10.140.2100">
    <property type="match status" value="1"/>
</dbReference>
<dbReference type="Gene3D" id="6.10.140.2110">
    <property type="match status" value="1"/>
</dbReference>
<dbReference type="InterPro" id="IPR000971">
    <property type="entry name" value="Globin"/>
</dbReference>
<dbReference type="InterPro" id="IPR009050">
    <property type="entry name" value="Globin-like_sf"/>
</dbReference>
<dbReference type="InterPro" id="IPR002335">
    <property type="entry name" value="Myoglobin"/>
</dbReference>
<dbReference type="PANTHER" id="PTHR47132">
    <property type="entry name" value="MYOGLOBIN"/>
    <property type="match status" value="1"/>
</dbReference>
<dbReference type="PANTHER" id="PTHR47132:SF1">
    <property type="entry name" value="MYOGLOBIN"/>
    <property type="match status" value="1"/>
</dbReference>
<dbReference type="Pfam" id="PF00042">
    <property type="entry name" value="Globin"/>
    <property type="match status" value="1"/>
</dbReference>
<dbReference type="PRINTS" id="PR00613">
    <property type="entry name" value="MYOGLOBIN"/>
</dbReference>
<dbReference type="SUPFAM" id="SSF46458">
    <property type="entry name" value="Globin-like"/>
    <property type="match status" value="1"/>
</dbReference>
<dbReference type="PROSITE" id="PS01033">
    <property type="entry name" value="GLOBIN"/>
    <property type="match status" value="1"/>
</dbReference>
<proteinExistence type="evidence at protein level"/>